<sequence>MTLTAPPRLLLVHAHPDDETLWTGGTIARYAARGVQVVVVTCTLGEEGEVIPDNLRGLAADQADQLGGYRVGELRSACAALRVADQRFLGGVGRWRDSGMLWEKPGQASALPDAHPRAFAVGDADEQADALEELLREFRPQVVVTYAADGGYGHPDHIRAHEVTMAAAAKVPDVLRVFHAVPSQGVVKEGLAALAEAEGMPFELPEPHELPGVPDERITTVVDVGEHLPAKISALRAHGTQVKMWLEQWNNGAGVAAYALSNGVAQPVVNTEHYVLATGDQQGCETDLFGGLGVSGTEPVGAR</sequence>
<name>MSHB1_SACEN</name>
<dbReference type="EC" id="3.5.1.103" evidence="1"/>
<dbReference type="EMBL" id="AM420293">
    <property type="protein sequence ID" value="CAM00340.1"/>
    <property type="molecule type" value="Genomic_DNA"/>
</dbReference>
<dbReference type="RefSeq" id="WP_009949331.1">
    <property type="nucleotide sequence ID" value="NC_009142.1"/>
</dbReference>
<dbReference type="SMR" id="A4F8G5"/>
<dbReference type="STRING" id="405948.SACE_1008"/>
<dbReference type="KEGG" id="sen:SACE_1008"/>
<dbReference type="eggNOG" id="COG2120">
    <property type="taxonomic scope" value="Bacteria"/>
</dbReference>
<dbReference type="HOGENOM" id="CLU_049311_2_1_11"/>
<dbReference type="OrthoDB" id="158614at2"/>
<dbReference type="Proteomes" id="UP000006728">
    <property type="component" value="Chromosome"/>
</dbReference>
<dbReference type="GO" id="GO:0035595">
    <property type="term" value="F:N-acetylglucosaminylinositol deacetylase activity"/>
    <property type="evidence" value="ECO:0007669"/>
    <property type="project" value="UniProtKB-EC"/>
</dbReference>
<dbReference type="GO" id="GO:0008270">
    <property type="term" value="F:zinc ion binding"/>
    <property type="evidence" value="ECO:0007669"/>
    <property type="project" value="UniProtKB-UniRule"/>
</dbReference>
<dbReference type="GO" id="GO:0010125">
    <property type="term" value="P:mycothiol biosynthetic process"/>
    <property type="evidence" value="ECO:0007669"/>
    <property type="project" value="UniProtKB-UniRule"/>
</dbReference>
<dbReference type="Gene3D" id="3.40.50.10320">
    <property type="entry name" value="LmbE-like"/>
    <property type="match status" value="1"/>
</dbReference>
<dbReference type="HAMAP" id="MF_01696">
    <property type="entry name" value="MshB"/>
    <property type="match status" value="1"/>
</dbReference>
<dbReference type="InterPro" id="IPR003737">
    <property type="entry name" value="GlcNAc_PI_deacetylase-related"/>
</dbReference>
<dbReference type="InterPro" id="IPR024078">
    <property type="entry name" value="LmbE-like_dom_sf"/>
</dbReference>
<dbReference type="InterPro" id="IPR017810">
    <property type="entry name" value="Mycothiol_biosynthesis_MshB"/>
</dbReference>
<dbReference type="NCBIfam" id="TIGR03445">
    <property type="entry name" value="mycothiol_MshB"/>
    <property type="match status" value="1"/>
</dbReference>
<dbReference type="PANTHER" id="PTHR12993:SF26">
    <property type="entry name" value="1D-MYO-INOSITOL 2-ACETAMIDO-2-DEOXY-ALPHA-D-GLUCOPYRANOSIDE DEACETYLASE"/>
    <property type="match status" value="1"/>
</dbReference>
<dbReference type="PANTHER" id="PTHR12993">
    <property type="entry name" value="N-ACETYLGLUCOSAMINYL-PHOSPHATIDYLINOSITOL DE-N-ACETYLASE-RELATED"/>
    <property type="match status" value="1"/>
</dbReference>
<dbReference type="Pfam" id="PF02585">
    <property type="entry name" value="PIG-L"/>
    <property type="match status" value="1"/>
</dbReference>
<dbReference type="SUPFAM" id="SSF102588">
    <property type="entry name" value="LmbE-like"/>
    <property type="match status" value="1"/>
</dbReference>
<protein>
    <recommendedName>
        <fullName evidence="1">1D-myo-inositol 2-acetamido-2-deoxy-alpha-D-glucopyranoside deacetylase 1</fullName>
        <shortName evidence="1">GlcNAc-Ins deacetylase 1</shortName>
        <ecNumber evidence="1">3.5.1.103</ecNumber>
    </recommendedName>
    <alternativeName>
        <fullName>N-acetyl-1-D-myo-inositol 2-amino-2-deoxy-alpha-D-glucopyranoside deacetylase 1</fullName>
    </alternativeName>
</protein>
<comment type="function">
    <text evidence="1">Catalyzes the deacetylation of 1D-myo-inositol 2-acetamido-2-deoxy-alpha-D-glucopyranoside (GlcNAc-Ins) in the mycothiol biosynthesis pathway.</text>
</comment>
<comment type="catalytic activity">
    <reaction evidence="1">
        <text>1D-myo-inositol 2-acetamido-2-deoxy-alpha-D-glucopyranoside + H2O = 1D-myo-inositol 2-amino-2-deoxy-alpha-D-glucopyranoside + acetate</text>
        <dbReference type="Rhea" id="RHEA:26180"/>
        <dbReference type="ChEBI" id="CHEBI:15377"/>
        <dbReference type="ChEBI" id="CHEBI:30089"/>
        <dbReference type="ChEBI" id="CHEBI:52442"/>
        <dbReference type="ChEBI" id="CHEBI:58886"/>
        <dbReference type="EC" id="3.5.1.103"/>
    </reaction>
</comment>
<comment type="cofactor">
    <cofactor evidence="1">
        <name>Zn(2+)</name>
        <dbReference type="ChEBI" id="CHEBI:29105"/>
    </cofactor>
    <text evidence="1">Binds 1 zinc ion per subunit.</text>
</comment>
<comment type="similarity">
    <text evidence="1">Belongs to the MshB deacetylase family.</text>
</comment>
<organism>
    <name type="scientific">Saccharopolyspora erythraea (strain ATCC 11635 / DSM 40517 / JCM 4748 / NBRC 13426 / NCIMB 8594 / NRRL 2338)</name>
    <dbReference type="NCBI Taxonomy" id="405948"/>
    <lineage>
        <taxon>Bacteria</taxon>
        <taxon>Bacillati</taxon>
        <taxon>Actinomycetota</taxon>
        <taxon>Actinomycetes</taxon>
        <taxon>Pseudonocardiales</taxon>
        <taxon>Pseudonocardiaceae</taxon>
        <taxon>Saccharopolyspora</taxon>
    </lineage>
</organism>
<reference key="1">
    <citation type="journal article" date="2007" name="Nat. Biotechnol.">
        <title>Complete genome sequence of the erythromycin-producing bacterium Saccharopolyspora erythraea NRRL23338.</title>
        <authorList>
            <person name="Oliynyk M."/>
            <person name="Samborskyy M."/>
            <person name="Lester J.B."/>
            <person name="Mironenko T."/>
            <person name="Scott N."/>
            <person name="Dickens S."/>
            <person name="Haydock S.F."/>
            <person name="Leadlay P.F."/>
        </authorList>
    </citation>
    <scope>NUCLEOTIDE SEQUENCE [LARGE SCALE GENOMIC DNA]</scope>
    <source>
        <strain>ATCC 11635 / DSM 40517 / JCM 4748 / NBRC 13426 / NCIMB 8594 / NRRL 2338</strain>
    </source>
</reference>
<feature type="chain" id="PRO_0000400218" description="1D-myo-inositol 2-acetamido-2-deoxy-alpha-D-glucopyranoside deacetylase 1">
    <location>
        <begin position="1"/>
        <end position="303"/>
    </location>
</feature>
<feature type="binding site" evidence="1">
    <location>
        <position position="15"/>
    </location>
    <ligand>
        <name>Zn(2+)</name>
        <dbReference type="ChEBI" id="CHEBI:29105"/>
    </ligand>
</feature>
<feature type="binding site" evidence="1">
    <location>
        <position position="18"/>
    </location>
    <ligand>
        <name>Zn(2+)</name>
        <dbReference type="ChEBI" id="CHEBI:29105"/>
    </ligand>
</feature>
<feature type="binding site" evidence="1">
    <location>
        <position position="157"/>
    </location>
    <ligand>
        <name>Zn(2+)</name>
        <dbReference type="ChEBI" id="CHEBI:29105"/>
    </ligand>
</feature>
<gene>
    <name evidence="1" type="primary">mshB1</name>
    <name type="ordered locus">SACE_1008</name>
</gene>
<evidence type="ECO:0000255" key="1">
    <source>
        <dbReference type="HAMAP-Rule" id="MF_01696"/>
    </source>
</evidence>
<accession>A4F8G5</accession>
<proteinExistence type="inferred from homology"/>
<keyword id="KW-0378">Hydrolase</keyword>
<keyword id="KW-0479">Metal-binding</keyword>
<keyword id="KW-1185">Reference proteome</keyword>
<keyword id="KW-0862">Zinc</keyword>